<organism>
    <name type="scientific">Rhizobium etli (strain ATCC 51251 / DSM 11541 / JCM 21823 / NBRC 15573 / CFN 42)</name>
    <dbReference type="NCBI Taxonomy" id="347834"/>
    <lineage>
        <taxon>Bacteria</taxon>
        <taxon>Pseudomonadati</taxon>
        <taxon>Pseudomonadota</taxon>
        <taxon>Alphaproteobacteria</taxon>
        <taxon>Hyphomicrobiales</taxon>
        <taxon>Rhizobiaceae</taxon>
        <taxon>Rhizobium/Agrobacterium group</taxon>
        <taxon>Rhizobium</taxon>
    </lineage>
</organism>
<keyword id="KW-0535">Nitrogen fixation</keyword>
<keyword id="KW-0614">Plasmid</keyword>
<keyword id="KW-1185">Reference proteome</keyword>
<gene>
    <name evidence="1" type="primary">nifW</name>
    <name type="ordered locus">RHE_PD00223</name>
</gene>
<sequence>MCRCSADSSPVDVKDILNRLKSLSAAEEFFEALGVPYDPKVLDVSRLHIMKRMGQYLAAEDFSHLPDRVIAARARAILERAYCDFATSAPLSHRVFKVLKDHNPNRPVTPGRTVVPLDSFLKPFEKK</sequence>
<name>NIFW_RHIEC</name>
<feature type="chain" id="PRO_0000265752" description="Nitrogenase-stabilizing/protective protein NifW">
    <location>
        <begin position="1"/>
        <end position="127"/>
    </location>
</feature>
<reference key="1">
    <citation type="journal article" date="2003" name="Genome Biol.">
        <title>The mosaic structure of the symbiotic plasmid of Rhizobium etli CFN42 and its relation to other symbiotic genome compartments.</title>
        <authorList>
            <person name="Gonzalez V."/>
            <person name="Bustos P."/>
            <person name="Ramirez-Romero M.A."/>
            <person name="Medrano-Soto A."/>
            <person name="Salgado H."/>
            <person name="Hernandez-Gonzalez I."/>
            <person name="Hernandez-Celis J.C."/>
            <person name="Quintero V."/>
            <person name="Moreno-Hagelsieb G."/>
            <person name="Girard L."/>
            <person name="Rodriguez O."/>
            <person name="Flores M."/>
            <person name="Cevallos M.A."/>
            <person name="Collado-Vides J."/>
            <person name="Romero D."/>
            <person name="Davila G."/>
        </authorList>
    </citation>
    <scope>NUCLEOTIDE SEQUENCE [LARGE SCALE GENOMIC DNA]</scope>
    <source>
        <strain>ATCC 51251 / DSM 11541 / JCM 21823 / NBRC 15573 / CFN 42</strain>
    </source>
</reference>
<reference key="2">
    <citation type="journal article" date="2006" name="Proc. Natl. Acad. Sci. U.S.A.">
        <title>The partitioned Rhizobium etli genome: genetic and metabolic redundancy in seven interacting replicons.</title>
        <authorList>
            <person name="Gonzalez V."/>
            <person name="Santamaria R.I."/>
            <person name="Bustos P."/>
            <person name="Hernandez-Gonzalez I."/>
            <person name="Medrano-Soto A."/>
            <person name="Moreno-Hagelsieb G."/>
            <person name="Janga S.C."/>
            <person name="Ramirez M.A."/>
            <person name="Jimenez-Jacinto V."/>
            <person name="Collado-Vides J."/>
            <person name="Davila G."/>
        </authorList>
    </citation>
    <scope>NUCLEOTIDE SEQUENCE [LARGE SCALE GENOMIC DNA]</scope>
    <source>
        <strain>ATCC 51251 / DSM 11541 / JCM 21823 / NBRC 15573 / CFN 42</strain>
    </source>
</reference>
<dbReference type="EMBL" id="U80928">
    <property type="protein sequence ID" value="AAM54828.1"/>
    <property type="molecule type" value="Genomic_DNA"/>
</dbReference>
<dbReference type="RefSeq" id="WP_004678534.1">
    <property type="nucleotide sequence ID" value="NC_004041.2"/>
</dbReference>
<dbReference type="KEGG" id="ret:RHE_PD00223"/>
<dbReference type="HOGENOM" id="CLU_145318_0_0_5"/>
<dbReference type="OrthoDB" id="9811868at2"/>
<dbReference type="Proteomes" id="UP000001936">
    <property type="component" value="Plasmid p42d"/>
</dbReference>
<dbReference type="GO" id="GO:0009399">
    <property type="term" value="P:nitrogen fixation"/>
    <property type="evidence" value="ECO:0007669"/>
    <property type="project" value="UniProtKB-UniRule"/>
</dbReference>
<dbReference type="HAMAP" id="MF_00529">
    <property type="entry name" value="NifW"/>
    <property type="match status" value="1"/>
</dbReference>
<dbReference type="InterPro" id="IPR004893">
    <property type="entry name" value="NifW"/>
</dbReference>
<dbReference type="NCBIfam" id="NF002009">
    <property type="entry name" value="PRK00810.1"/>
    <property type="match status" value="1"/>
</dbReference>
<dbReference type="Pfam" id="PF03206">
    <property type="entry name" value="NifW"/>
    <property type="match status" value="1"/>
</dbReference>
<dbReference type="PIRSF" id="PIRSF005790">
    <property type="entry name" value="NifW"/>
    <property type="match status" value="1"/>
</dbReference>
<protein>
    <recommendedName>
        <fullName evidence="1">Nitrogenase-stabilizing/protective protein NifW</fullName>
    </recommendedName>
</protein>
<geneLocation type="plasmid">
    <name>sym p42d</name>
</geneLocation>
<evidence type="ECO:0000255" key="1">
    <source>
        <dbReference type="HAMAP-Rule" id="MF_00529"/>
    </source>
</evidence>
<comment type="function">
    <text evidence="1">May protect the nitrogenase Fe-Mo protein from oxidative damage.</text>
</comment>
<comment type="subunit">
    <text evidence="1">Homotrimer; associates with NifD.</text>
</comment>
<comment type="similarity">
    <text evidence="1">Belongs to the NifW family.</text>
</comment>
<proteinExistence type="inferred from homology"/>
<accession>Q8KLB6</accession>